<reference key="1">
    <citation type="submission" date="2008-02" db="EMBL/GenBank/DDBJ databases">
        <title>Complete sequence of Synechococcus sp. PCC 7002.</title>
        <authorList>
            <person name="Li T."/>
            <person name="Zhao J."/>
            <person name="Zhao C."/>
            <person name="Liu Z."/>
            <person name="Zhao F."/>
            <person name="Marquardt J."/>
            <person name="Nomura C.T."/>
            <person name="Persson S."/>
            <person name="Detter J.C."/>
            <person name="Richardson P.M."/>
            <person name="Lanz C."/>
            <person name="Schuster S.C."/>
            <person name="Wang J."/>
            <person name="Li S."/>
            <person name="Huang X."/>
            <person name="Cai T."/>
            <person name="Yu Z."/>
            <person name="Luo J."/>
            <person name="Zhao J."/>
            <person name="Bryant D.A."/>
        </authorList>
    </citation>
    <scope>NUCLEOTIDE SEQUENCE [LARGE SCALE GENOMIC DNA]</scope>
    <source>
        <strain>ATCC 27264 / PCC 7002 / PR-6</strain>
    </source>
</reference>
<evidence type="ECO:0000255" key="1">
    <source>
        <dbReference type="HAMAP-Rule" id="MF_00539"/>
    </source>
</evidence>
<evidence type="ECO:0000256" key="2">
    <source>
        <dbReference type="SAM" id="MobiDB-lite"/>
    </source>
</evidence>
<evidence type="ECO:0000305" key="3"/>
<feature type="chain" id="PRO_1000128818" description="Large ribosomal subunit protein bL27">
    <location>
        <begin position="1"/>
        <end position="88"/>
    </location>
</feature>
<feature type="region of interest" description="Disordered" evidence="2">
    <location>
        <begin position="1"/>
        <end position="21"/>
    </location>
</feature>
<comment type="similarity">
    <text evidence="1">Belongs to the bacterial ribosomal protein bL27 family.</text>
</comment>
<gene>
    <name evidence="1" type="primary">rpmA</name>
    <name evidence="1" type="synonym">rpl27</name>
    <name type="ordered locus">SYNPCC7002_A0489</name>
</gene>
<dbReference type="EMBL" id="CP000951">
    <property type="protein sequence ID" value="ACA98496.1"/>
    <property type="molecule type" value="Genomic_DNA"/>
</dbReference>
<dbReference type="RefSeq" id="WP_012306120.1">
    <property type="nucleotide sequence ID" value="NZ_JAHHPU010000001.1"/>
</dbReference>
<dbReference type="SMR" id="B1XPD9"/>
<dbReference type="STRING" id="32049.SYNPCC7002_A0489"/>
<dbReference type="KEGG" id="syp:SYNPCC7002_A0489"/>
<dbReference type="eggNOG" id="COG0211">
    <property type="taxonomic scope" value="Bacteria"/>
</dbReference>
<dbReference type="HOGENOM" id="CLU_095424_4_0_3"/>
<dbReference type="Proteomes" id="UP000001688">
    <property type="component" value="Chromosome"/>
</dbReference>
<dbReference type="GO" id="GO:0022625">
    <property type="term" value="C:cytosolic large ribosomal subunit"/>
    <property type="evidence" value="ECO:0007669"/>
    <property type="project" value="TreeGrafter"/>
</dbReference>
<dbReference type="GO" id="GO:0003735">
    <property type="term" value="F:structural constituent of ribosome"/>
    <property type="evidence" value="ECO:0007669"/>
    <property type="project" value="InterPro"/>
</dbReference>
<dbReference type="GO" id="GO:0006412">
    <property type="term" value="P:translation"/>
    <property type="evidence" value="ECO:0007669"/>
    <property type="project" value="UniProtKB-UniRule"/>
</dbReference>
<dbReference type="FunFam" id="2.40.50.100:FF:000004">
    <property type="entry name" value="50S ribosomal protein L27"/>
    <property type="match status" value="1"/>
</dbReference>
<dbReference type="Gene3D" id="2.40.50.100">
    <property type="match status" value="1"/>
</dbReference>
<dbReference type="HAMAP" id="MF_00539">
    <property type="entry name" value="Ribosomal_bL27"/>
    <property type="match status" value="1"/>
</dbReference>
<dbReference type="InterPro" id="IPR001684">
    <property type="entry name" value="Ribosomal_bL27"/>
</dbReference>
<dbReference type="InterPro" id="IPR018261">
    <property type="entry name" value="Ribosomal_bL27_CS"/>
</dbReference>
<dbReference type="NCBIfam" id="TIGR00062">
    <property type="entry name" value="L27"/>
    <property type="match status" value="1"/>
</dbReference>
<dbReference type="PANTHER" id="PTHR15893:SF0">
    <property type="entry name" value="LARGE RIBOSOMAL SUBUNIT PROTEIN BL27M"/>
    <property type="match status" value="1"/>
</dbReference>
<dbReference type="PANTHER" id="PTHR15893">
    <property type="entry name" value="RIBOSOMAL PROTEIN L27"/>
    <property type="match status" value="1"/>
</dbReference>
<dbReference type="Pfam" id="PF01016">
    <property type="entry name" value="Ribosomal_L27"/>
    <property type="match status" value="1"/>
</dbReference>
<dbReference type="PRINTS" id="PR00063">
    <property type="entry name" value="RIBOSOMALL27"/>
</dbReference>
<dbReference type="SUPFAM" id="SSF110324">
    <property type="entry name" value="Ribosomal L27 protein-like"/>
    <property type="match status" value="1"/>
</dbReference>
<dbReference type="PROSITE" id="PS00831">
    <property type="entry name" value="RIBOSOMAL_L27"/>
    <property type="match status" value="1"/>
</dbReference>
<sequence length="88" mass="9525">MAHKKGTGSTRNGRDSRAQRLGVKRYGGQTVTTGSILVRQRGTKVHPGNNVGRGGDDTLFALVDGIVKFEHYKRGRRKVSVYPADASA</sequence>
<accession>B1XPD9</accession>
<protein>
    <recommendedName>
        <fullName evidence="1">Large ribosomal subunit protein bL27</fullName>
    </recommendedName>
    <alternativeName>
        <fullName evidence="3">50S ribosomal protein L27</fullName>
    </alternativeName>
</protein>
<proteinExistence type="inferred from homology"/>
<organism>
    <name type="scientific">Picosynechococcus sp. (strain ATCC 27264 / PCC 7002 / PR-6)</name>
    <name type="common">Agmenellum quadruplicatum</name>
    <dbReference type="NCBI Taxonomy" id="32049"/>
    <lineage>
        <taxon>Bacteria</taxon>
        <taxon>Bacillati</taxon>
        <taxon>Cyanobacteriota</taxon>
        <taxon>Cyanophyceae</taxon>
        <taxon>Oscillatoriophycideae</taxon>
        <taxon>Chroococcales</taxon>
        <taxon>Geminocystaceae</taxon>
        <taxon>Picosynechococcus</taxon>
    </lineage>
</organism>
<name>RL27_PICP2</name>
<keyword id="KW-1185">Reference proteome</keyword>
<keyword id="KW-0687">Ribonucleoprotein</keyword>
<keyword id="KW-0689">Ribosomal protein</keyword>